<feature type="chain" id="PRO_0000362905" description="ATP synthase subunit c, chloroplastic">
    <location>
        <begin position="1"/>
        <end position="81"/>
    </location>
</feature>
<feature type="transmembrane region" description="Helical" evidence="1">
    <location>
        <begin position="7"/>
        <end position="27"/>
    </location>
</feature>
<feature type="transmembrane region" description="Helical" evidence="1">
    <location>
        <begin position="57"/>
        <end position="77"/>
    </location>
</feature>
<feature type="site" description="Reversibly protonated during proton transport" evidence="1">
    <location>
        <position position="61"/>
    </location>
</feature>
<sequence>MNPLISAASVIAAGLAVGLASIGPGIGQGTAAGQAVEGIARQPEAEGKIRGTLLLSLAFMEALTIYGLVVALALLFANPFV</sequence>
<protein>
    <recommendedName>
        <fullName evidence="1">ATP synthase subunit c, chloroplastic</fullName>
    </recommendedName>
    <alternativeName>
        <fullName evidence="1">ATP synthase F(0) sector subunit c</fullName>
    </alternativeName>
    <alternativeName>
        <fullName evidence="1">ATPase subunit III</fullName>
    </alternativeName>
    <alternativeName>
        <fullName evidence="1">F-type ATPase subunit c</fullName>
        <shortName evidence="1">F-ATPase subunit c</shortName>
    </alternativeName>
    <alternativeName>
        <fullName evidence="1">Lipid-binding protein</fullName>
    </alternativeName>
</protein>
<proteinExistence type="inferred from homology"/>
<keyword id="KW-0066">ATP synthesis</keyword>
<keyword id="KW-0138">CF(0)</keyword>
<keyword id="KW-0150">Chloroplast</keyword>
<keyword id="KW-0375">Hydrogen ion transport</keyword>
<keyword id="KW-0406">Ion transport</keyword>
<keyword id="KW-0446">Lipid-binding</keyword>
<keyword id="KW-0472">Membrane</keyword>
<keyword id="KW-0934">Plastid</keyword>
<keyword id="KW-0793">Thylakoid</keyword>
<keyword id="KW-0812">Transmembrane</keyword>
<keyword id="KW-1133">Transmembrane helix</keyword>
<keyword id="KW-0813">Transport</keyword>
<evidence type="ECO:0000255" key="1">
    <source>
        <dbReference type="HAMAP-Rule" id="MF_01396"/>
    </source>
</evidence>
<reference key="1">
    <citation type="submission" date="2002-10" db="EMBL/GenBank/DDBJ databases">
        <authorList>
            <person name="Kim J.-S."/>
            <person name="Choi D.-W."/>
            <person name="Jeong W.J."/>
            <person name="Jung J.-D."/>
            <person name="Jeong S.W."/>
            <person name="Lim H.K."/>
            <person name="Park H.-W."/>
            <person name="Lee J.-A."/>
            <person name="Liu J.R."/>
            <person name="Cho K.Y."/>
        </authorList>
    </citation>
    <scope>NUCLEOTIDE SEQUENCE [GENOMIC DNA]</scope>
    <source>
        <strain>cv. Baekmibaekdadagi</strain>
    </source>
</reference>
<reference key="2">
    <citation type="submission" date="2003-04" db="EMBL/GenBank/DDBJ databases">
        <title>Cloning and expression analysis of Cucumis sativus ATPase.</title>
        <authorList>
            <person name="Li Z."/>
            <person name="Zheng C."/>
        </authorList>
    </citation>
    <scope>NUCLEOTIDE SEQUENCE [GENOMIC DNA]</scope>
</reference>
<reference key="3">
    <citation type="journal article" date="2006" name="Plant Cell Rep.">
        <title>Complete sequence and organization of the cucumber (Cucumis sativus L. cv. Baekmibaekdadagi) chloroplast genome.</title>
        <authorList>
            <person name="Kim J.-S."/>
            <person name="Jung J.D."/>
            <person name="Lee J.-A."/>
            <person name="Park H.-W."/>
            <person name="Oh K.-H."/>
            <person name="Jeong W.J."/>
            <person name="Choi D.-W."/>
            <person name="Liu J.R."/>
            <person name="Cho K.Y."/>
        </authorList>
    </citation>
    <scope>NUCLEOTIDE SEQUENCE [LARGE SCALE GENOMIC DNA]</scope>
    <source>
        <strain>cv. Baekmibaekdadagi</strain>
    </source>
</reference>
<reference key="4">
    <citation type="journal article" date="2007" name="Cell. Mol. Biol. Lett.">
        <title>The complete structure of the cucumber (Cucumis sativus L.) chloroplast genome: its composition and comparative analysis.</title>
        <authorList>
            <person name="Plader W.W."/>
            <person name="Yukawa Y."/>
            <person name="Sugiura M."/>
            <person name="Malepszy S."/>
        </authorList>
    </citation>
    <scope>NUCLEOTIDE SEQUENCE [LARGE SCALE GENOMIC DNA]</scope>
    <source>
        <strain>cv. Borszczagowski</strain>
    </source>
</reference>
<reference key="5">
    <citation type="journal article" date="2007" name="Genome">
        <title>Sequencing cucumber (Cucumis sativus L.) chloroplast genomes identifies differences between chilling-tolerant and -susceptible cucumber lines.</title>
        <authorList>
            <person name="Chung S.-M."/>
            <person name="Gordon V.S."/>
            <person name="Staub J.E."/>
        </authorList>
    </citation>
    <scope>NUCLEOTIDE SEQUENCE [LARGE SCALE GENOMIC DNA]</scope>
    <source>
        <strain>cv. Chipper</strain>
        <strain>cv. Gy14</strain>
    </source>
</reference>
<organism>
    <name type="scientific">Cucumis sativus</name>
    <name type="common">Cucumber</name>
    <dbReference type="NCBI Taxonomy" id="3659"/>
    <lineage>
        <taxon>Eukaryota</taxon>
        <taxon>Viridiplantae</taxon>
        <taxon>Streptophyta</taxon>
        <taxon>Embryophyta</taxon>
        <taxon>Tracheophyta</taxon>
        <taxon>Spermatophyta</taxon>
        <taxon>Magnoliopsida</taxon>
        <taxon>eudicotyledons</taxon>
        <taxon>Gunneridae</taxon>
        <taxon>Pentapetalae</taxon>
        <taxon>rosids</taxon>
        <taxon>fabids</taxon>
        <taxon>Cucurbitales</taxon>
        <taxon>Cucurbitaceae</taxon>
        <taxon>Benincaseae</taxon>
        <taxon>Cucumis</taxon>
    </lineage>
</organism>
<geneLocation type="chloroplast"/>
<comment type="function">
    <text evidence="1">F(1)F(0) ATP synthase produces ATP from ADP in the presence of a proton or sodium gradient. F-type ATPases consist of two structural domains, F(1) containing the extramembraneous catalytic core and F(0) containing the membrane proton channel, linked together by a central stalk and a peripheral stalk. During catalysis, ATP synthesis in the catalytic domain of F(1) is coupled via a rotary mechanism of the central stalk subunits to proton translocation.</text>
</comment>
<comment type="function">
    <text evidence="1">Key component of the F(0) channel; it plays a direct role in translocation across the membrane. A homomeric c-ring of between 10-14 subunits forms the central stalk rotor element with the F(1) delta and epsilon subunits.</text>
</comment>
<comment type="subunit">
    <text evidence="1">F-type ATPases have 2 components, F(1) - the catalytic core - and F(0) - the membrane proton channel. F(1) has five subunits: alpha(3), beta(3), gamma(1), delta(1), epsilon(1). F(0) has four main subunits: a(1), b(1), b'(1) and c(10-14). The alpha and beta chains form an alternating ring which encloses part of the gamma chain. F(1) is attached to F(0) by a central stalk formed by the gamma and epsilon chains, while a peripheral stalk is formed by the delta, b and b' chains.</text>
</comment>
<comment type="subcellular location">
    <subcellularLocation>
        <location evidence="1">Plastid</location>
        <location evidence="1">Chloroplast thylakoid membrane</location>
        <topology evidence="1">Multi-pass membrane protein</topology>
    </subcellularLocation>
</comment>
<comment type="miscellaneous">
    <text>In plastids the F-type ATPase is also known as CF(1)CF(0).</text>
</comment>
<comment type="similarity">
    <text evidence="1">Belongs to the ATPase C chain family.</text>
</comment>
<name>ATPH_CUCSA</name>
<gene>
    <name evidence="1" type="primary">atpH</name>
    <name type="ordered locus">CsCp013</name>
</gene>
<accession>Q6WQW2</accession>
<dbReference type="EMBL" id="AY173934">
    <property type="protein sequence ID" value="AAO38178.1"/>
    <property type="molecule type" value="Genomic_DNA"/>
</dbReference>
<dbReference type="EMBL" id="AY274821">
    <property type="protein sequence ID" value="AAP36991.1"/>
    <property type="molecule type" value="mRNA"/>
</dbReference>
<dbReference type="EMBL" id="DQ119058">
    <property type="protein sequence ID" value="AAZ94639.1"/>
    <property type="molecule type" value="Genomic_DNA"/>
</dbReference>
<dbReference type="EMBL" id="DQ865975">
    <property type="protein sequence ID" value="ABI97404.1"/>
    <property type="molecule type" value="Genomic_DNA"/>
</dbReference>
<dbReference type="EMBL" id="DQ865976">
    <property type="protein sequence ID" value="ABI98732.1"/>
    <property type="molecule type" value="Genomic_DNA"/>
</dbReference>
<dbReference type="EMBL" id="AJ970307">
    <property type="protein sequence ID" value="CAJ00745.1"/>
    <property type="molecule type" value="Genomic_DNA"/>
</dbReference>
<dbReference type="RefSeq" id="YP_247586.1">
    <property type="nucleotide sequence ID" value="NC_007144.1"/>
</dbReference>
<dbReference type="SMR" id="Q6WQW2"/>
<dbReference type="GeneID" id="3429378"/>
<dbReference type="KEGG" id="csv:3429378"/>
<dbReference type="eggNOG" id="KOG0232">
    <property type="taxonomic scope" value="Eukaryota"/>
</dbReference>
<dbReference type="OrthoDB" id="438052at2759"/>
<dbReference type="GO" id="GO:0009535">
    <property type="term" value="C:chloroplast thylakoid membrane"/>
    <property type="evidence" value="ECO:0007669"/>
    <property type="project" value="UniProtKB-SubCell"/>
</dbReference>
<dbReference type="GO" id="GO:0045259">
    <property type="term" value="C:proton-transporting ATP synthase complex"/>
    <property type="evidence" value="ECO:0007669"/>
    <property type="project" value="UniProtKB-KW"/>
</dbReference>
<dbReference type="GO" id="GO:0033177">
    <property type="term" value="C:proton-transporting two-sector ATPase complex, proton-transporting domain"/>
    <property type="evidence" value="ECO:0007669"/>
    <property type="project" value="InterPro"/>
</dbReference>
<dbReference type="GO" id="GO:0008289">
    <property type="term" value="F:lipid binding"/>
    <property type="evidence" value="ECO:0007669"/>
    <property type="project" value="UniProtKB-KW"/>
</dbReference>
<dbReference type="GO" id="GO:0046933">
    <property type="term" value="F:proton-transporting ATP synthase activity, rotational mechanism"/>
    <property type="evidence" value="ECO:0007669"/>
    <property type="project" value="UniProtKB-UniRule"/>
</dbReference>
<dbReference type="CDD" id="cd18183">
    <property type="entry name" value="ATP-synt_Fo_c_ATPH"/>
    <property type="match status" value="1"/>
</dbReference>
<dbReference type="FunFam" id="1.20.20.10:FF:000001">
    <property type="entry name" value="ATP synthase subunit c, chloroplastic"/>
    <property type="match status" value="1"/>
</dbReference>
<dbReference type="Gene3D" id="1.20.20.10">
    <property type="entry name" value="F1F0 ATP synthase subunit C"/>
    <property type="match status" value="1"/>
</dbReference>
<dbReference type="HAMAP" id="MF_01396">
    <property type="entry name" value="ATP_synth_c_bact"/>
    <property type="match status" value="1"/>
</dbReference>
<dbReference type="InterPro" id="IPR005953">
    <property type="entry name" value="ATP_synth_csu_bac/chlpt"/>
</dbReference>
<dbReference type="InterPro" id="IPR000454">
    <property type="entry name" value="ATP_synth_F0_csu"/>
</dbReference>
<dbReference type="InterPro" id="IPR020537">
    <property type="entry name" value="ATP_synth_F0_csu_DDCD_BS"/>
</dbReference>
<dbReference type="InterPro" id="IPR038662">
    <property type="entry name" value="ATP_synth_F0_csu_sf"/>
</dbReference>
<dbReference type="InterPro" id="IPR002379">
    <property type="entry name" value="ATPase_proteolipid_c-like_dom"/>
</dbReference>
<dbReference type="InterPro" id="IPR035921">
    <property type="entry name" value="F/V-ATP_Csub_sf"/>
</dbReference>
<dbReference type="NCBIfam" id="TIGR01260">
    <property type="entry name" value="ATP_synt_c"/>
    <property type="match status" value="1"/>
</dbReference>
<dbReference type="NCBIfam" id="NF005608">
    <property type="entry name" value="PRK07354.1"/>
    <property type="match status" value="1"/>
</dbReference>
<dbReference type="PANTHER" id="PTHR10031">
    <property type="entry name" value="ATP SYNTHASE LIPID-BINDING PROTEIN, MITOCHONDRIAL"/>
    <property type="match status" value="1"/>
</dbReference>
<dbReference type="PANTHER" id="PTHR10031:SF0">
    <property type="entry name" value="ATPASE PROTEIN 9"/>
    <property type="match status" value="1"/>
</dbReference>
<dbReference type="Pfam" id="PF00137">
    <property type="entry name" value="ATP-synt_C"/>
    <property type="match status" value="1"/>
</dbReference>
<dbReference type="PRINTS" id="PR00124">
    <property type="entry name" value="ATPASEC"/>
</dbReference>
<dbReference type="SUPFAM" id="SSF81333">
    <property type="entry name" value="F1F0 ATP synthase subunit C"/>
    <property type="match status" value="1"/>
</dbReference>
<dbReference type="PROSITE" id="PS00605">
    <property type="entry name" value="ATPASE_C"/>
    <property type="match status" value="1"/>
</dbReference>